<feature type="chain" id="PRO_0000378133" description="UPF0179 protein NP_3406A">
    <location>
        <begin position="1"/>
        <end position="147"/>
    </location>
</feature>
<organism>
    <name type="scientific">Natronomonas pharaonis (strain ATCC 35678 / DSM 2160 / CIP 103997 / JCM 8858 / NBRC 14720 / NCIMB 2260 / Gabara)</name>
    <name type="common">Halobacterium pharaonis</name>
    <dbReference type="NCBI Taxonomy" id="348780"/>
    <lineage>
        <taxon>Archaea</taxon>
        <taxon>Methanobacteriati</taxon>
        <taxon>Methanobacteriota</taxon>
        <taxon>Stenosarchaea group</taxon>
        <taxon>Halobacteria</taxon>
        <taxon>Halobacteriales</taxon>
        <taxon>Haloarculaceae</taxon>
        <taxon>Natronomonas</taxon>
    </lineage>
</organism>
<protein>
    <recommendedName>
        <fullName evidence="1">UPF0179 protein NP_3406A</fullName>
    </recommendedName>
</protein>
<name>Y3406_NATPD</name>
<keyword id="KW-1185">Reference proteome</keyword>
<evidence type="ECO:0000255" key="1">
    <source>
        <dbReference type="HAMAP-Rule" id="MF_00498"/>
    </source>
</evidence>
<reference key="1">
    <citation type="journal article" date="2005" name="Genome Res.">
        <title>Living with two extremes: conclusions from the genome sequence of Natronomonas pharaonis.</title>
        <authorList>
            <person name="Falb M."/>
            <person name="Pfeiffer F."/>
            <person name="Palm P."/>
            <person name="Rodewald K."/>
            <person name="Hickmann V."/>
            <person name="Tittor J."/>
            <person name="Oesterhelt D."/>
        </authorList>
    </citation>
    <scope>NUCLEOTIDE SEQUENCE [LARGE SCALE GENOMIC DNA]</scope>
    <source>
        <strain>ATCC 35678 / DSM 2160 / CIP 103997 / JCM 8858 / NBRC 14720 / NCIMB 2260 / Gabara</strain>
    </source>
</reference>
<sequence>MSTVTLLGERLAEVGTEFVYGGETDACEGCPYREQCLNLTEGRRYRVTGVRDSGTLECAVHDTGVTAVEVEPAPVLANVDANAAYAGSKASLVGPCPYTECPSHEFCEPDGADFDEEYQITEVVGDPPHDYCMLDRELQLVQFAAEE</sequence>
<proteinExistence type="inferred from homology"/>
<accession>Q3IQ04</accession>
<comment type="similarity">
    <text evidence="1">Belongs to the UPF0179 family.</text>
</comment>
<gene>
    <name type="ordered locus">NP_3406A</name>
</gene>
<dbReference type="EMBL" id="CR936257">
    <property type="protein sequence ID" value="CAI49794.1"/>
    <property type="molecule type" value="Genomic_DNA"/>
</dbReference>
<dbReference type="RefSeq" id="WP_011323414.1">
    <property type="nucleotide sequence ID" value="NC_007426.1"/>
</dbReference>
<dbReference type="STRING" id="348780.NP_3406A"/>
<dbReference type="EnsemblBacteria" id="CAI49794">
    <property type="protein sequence ID" value="CAI49794"/>
    <property type="gene ID" value="NP_3406A"/>
</dbReference>
<dbReference type="GeneID" id="3701767"/>
<dbReference type="KEGG" id="nph:NP_3406A"/>
<dbReference type="eggNOG" id="arCOG04477">
    <property type="taxonomic scope" value="Archaea"/>
</dbReference>
<dbReference type="HOGENOM" id="CLU_121764_0_0_2"/>
<dbReference type="OrthoDB" id="24613at2157"/>
<dbReference type="Proteomes" id="UP000002698">
    <property type="component" value="Chromosome"/>
</dbReference>
<dbReference type="HAMAP" id="MF_00498">
    <property type="entry name" value="UPF0179"/>
    <property type="match status" value="1"/>
</dbReference>
<dbReference type="InterPro" id="IPR005369">
    <property type="entry name" value="UPF0179"/>
</dbReference>
<dbReference type="PANTHER" id="PTHR40699">
    <property type="entry name" value="UPF0179 PROTEIN MJ1627"/>
    <property type="match status" value="1"/>
</dbReference>
<dbReference type="PANTHER" id="PTHR40699:SF1">
    <property type="entry name" value="UPF0179 PROTEIN MJ1627"/>
    <property type="match status" value="1"/>
</dbReference>
<dbReference type="Pfam" id="PF03684">
    <property type="entry name" value="UPF0179"/>
    <property type="match status" value="1"/>
</dbReference>
<dbReference type="PIRSF" id="PIRSF006595">
    <property type="entry name" value="UCP006595"/>
    <property type="match status" value="1"/>
</dbReference>